<comment type="function">
    <text evidence="1 3 4 5">Together with LptD, is involved in the assembly of lipopolysaccharide (LPS) at the surface of the outer membrane. Required for the proper assembly of LptD. Binds LPS and may serve as the LPS recognition site at the outer membrane.</text>
</comment>
<comment type="subunit">
    <text evidence="3 5 7 8 10">Component of the lipopolysaccharide transport and assembly complex. Interacts with LptD. May interact with LptD during its assembly by the beta-barrel assembly machine (BAM). Directly contacts LptD at a wide range of positions, encompassing multiple surfaces of LptE. In one specific interaction, LptE contacts a predicted extracellular loop of LptD through the lumen of the beta-barrel. This specific interaction is required for proper folding of LptD and assembly of the complex (PubMed:16861298, PubMed:20203010, PubMed:21257904, PubMed:21257909). Also interacts with LptM, which promotes the efficient assembly of the LptDE translocon by the BAM complex (PubMed:37821449).</text>
</comment>
<comment type="interaction">
    <interactant intactId="EBI-1119442">
        <id>P0ADC1</id>
    </interactant>
    <interactant intactId="EBI-549369">
        <id>P31554</id>
        <label>lptD</label>
    </interactant>
    <organismsDiffer>false</organismsDiffer>
    <experiments>19</experiments>
</comment>
<comment type="subcellular location">
    <subcellularLocation>
        <location evidence="1 6 7 9">Cell outer membrane</location>
        <topology evidence="1 6 7 9">Lipid-anchor</topology>
    </subcellularLocation>
    <text>A substantial portion is found inside the LptD beta-barrel.</text>
</comment>
<comment type="similarity">
    <text evidence="1">Belongs to the LptE lipoprotein family.</text>
</comment>
<proteinExistence type="evidence at protein level"/>
<evidence type="ECO:0000255" key="1">
    <source>
        <dbReference type="HAMAP-Rule" id="MF_01186"/>
    </source>
</evidence>
<evidence type="ECO:0000256" key="2">
    <source>
        <dbReference type="SAM" id="MobiDB-lite"/>
    </source>
</evidence>
<evidence type="ECO:0000269" key="3">
    <source>
    </source>
</evidence>
<evidence type="ECO:0000269" key="4">
    <source>
    </source>
</evidence>
<evidence type="ECO:0000269" key="5">
    <source>
    </source>
</evidence>
<evidence type="ECO:0000269" key="6">
    <source>
    </source>
</evidence>
<evidence type="ECO:0000269" key="7">
    <source>
    </source>
</evidence>
<evidence type="ECO:0000269" key="8">
    <source>
    </source>
</evidence>
<evidence type="ECO:0000269" key="9">
    <source>
    </source>
</evidence>
<evidence type="ECO:0000269" key="10">
    <source>
    </source>
</evidence>
<evidence type="ECO:0000305" key="11"/>
<evidence type="ECO:0007829" key="12">
    <source>
        <dbReference type="PDB" id="4NHR"/>
    </source>
</evidence>
<evidence type="ECO:0007829" key="13">
    <source>
        <dbReference type="PDB" id="4RH8"/>
    </source>
</evidence>
<keyword id="KW-0002">3D-structure</keyword>
<keyword id="KW-0998">Cell outer membrane</keyword>
<keyword id="KW-0449">Lipoprotein</keyword>
<keyword id="KW-0472">Membrane</keyword>
<keyword id="KW-0564">Palmitate</keyword>
<keyword id="KW-1185">Reference proteome</keyword>
<keyword id="KW-0732">Signal</keyword>
<sequence length="193" mass="21357">MRYLATLLLSLAVLITAGCGWHLRDTTQVPSTMKVMILDSGDPNGPLSRAVRNQLRLNGVELLDKETTRKDVPSLRLGKVSIAKDTASVFRNGQTAEYQMIMTVNATVLIPGRDIYPISAKVFRSFFDNPQMALAKDNEQDMIVKEMYDRAAEQLIRKLPSIRAADIRSDEEQTSTTTDTPATPARVSTTLGN</sequence>
<protein>
    <recommendedName>
        <fullName evidence="1">LPS-assembly lipoprotein LptE</fullName>
    </recommendedName>
    <alternativeName>
        <fullName>Rare lipoprotein B</fullName>
    </alternativeName>
</protein>
<name>LPTE_ECOLI</name>
<gene>
    <name evidence="1" type="primary">lptE</name>
    <name type="synonym">rlpB</name>
    <name type="ordered locus">b0641</name>
    <name type="ordered locus">JW0636</name>
</gene>
<accession>P0ADC1</accession>
<accession>P10101</accession>
<accession>P77576</accession>
<reference key="1">
    <citation type="journal article" date="1987" name="J. Bacteriol.">
        <title>Genes encoding two lipoproteins in the leuS-dacA region of the Escherichia coli chromosome.</title>
        <authorList>
            <person name="Takase I."/>
            <person name="Ishino F."/>
            <person name="Wachi M."/>
            <person name="Kamata H."/>
            <person name="Doi M."/>
            <person name="Asoh S."/>
            <person name="Matsuzawa H."/>
            <person name="Ohta T."/>
            <person name="Matsuhashi M."/>
        </authorList>
    </citation>
    <scope>NUCLEOTIDE SEQUENCE [GENOMIC DNA]</scope>
    <scope>LIPOPROTEIN</scope>
    <scope>SUBCELLULAR LOCATION</scope>
    <source>
        <strain>K12</strain>
    </source>
</reference>
<reference key="2">
    <citation type="journal article" date="1996" name="DNA Res.">
        <title>A 718-kb DNA sequence of the Escherichia coli K-12 genome corresponding to the 12.7-28.0 min region on the linkage map.</title>
        <authorList>
            <person name="Oshima T."/>
            <person name="Aiba H."/>
            <person name="Baba T."/>
            <person name="Fujita K."/>
            <person name="Hayashi K."/>
            <person name="Honjo A."/>
            <person name="Ikemoto K."/>
            <person name="Inada T."/>
            <person name="Itoh T."/>
            <person name="Kajihara M."/>
            <person name="Kanai K."/>
            <person name="Kashimoto K."/>
            <person name="Kimura S."/>
            <person name="Kitagawa M."/>
            <person name="Makino K."/>
            <person name="Masuda S."/>
            <person name="Miki T."/>
            <person name="Mizobuchi K."/>
            <person name="Mori H."/>
            <person name="Motomura K."/>
            <person name="Nakamura Y."/>
            <person name="Nashimoto H."/>
            <person name="Nishio Y."/>
            <person name="Saito N."/>
            <person name="Sampei G."/>
            <person name="Seki Y."/>
            <person name="Tagami H."/>
            <person name="Takemoto K."/>
            <person name="Wada C."/>
            <person name="Yamamoto Y."/>
            <person name="Yano M."/>
            <person name="Horiuchi T."/>
        </authorList>
    </citation>
    <scope>NUCLEOTIDE SEQUENCE [LARGE SCALE GENOMIC DNA]</scope>
    <source>
        <strain>K12 / W3110 / ATCC 27325 / DSM 5911</strain>
    </source>
</reference>
<reference key="3">
    <citation type="submission" date="1997-01" db="EMBL/GenBank/DDBJ databases">
        <title>Sequence of minutes 4-25 of Escherichia coli.</title>
        <authorList>
            <person name="Chung E."/>
            <person name="Allen E."/>
            <person name="Araujo R."/>
            <person name="Aparicio A.M."/>
            <person name="Davis K."/>
            <person name="Duncan M."/>
            <person name="Federspiel N."/>
            <person name="Hyman R."/>
            <person name="Kalman S."/>
            <person name="Komp C."/>
            <person name="Kurdi O."/>
            <person name="Lew H."/>
            <person name="Lin D."/>
            <person name="Namath A."/>
            <person name="Oefner P."/>
            <person name="Roberts D."/>
            <person name="Schramm S."/>
            <person name="Davis R.W."/>
        </authorList>
    </citation>
    <scope>NUCLEOTIDE SEQUENCE [LARGE SCALE GENOMIC DNA]</scope>
    <source>
        <strain>K12 / MG1655 / ATCC 47076</strain>
    </source>
</reference>
<reference key="4">
    <citation type="journal article" date="1997" name="Science">
        <title>The complete genome sequence of Escherichia coli K-12.</title>
        <authorList>
            <person name="Blattner F.R."/>
            <person name="Plunkett G. III"/>
            <person name="Bloch C.A."/>
            <person name="Perna N.T."/>
            <person name="Burland V."/>
            <person name="Riley M."/>
            <person name="Collado-Vides J."/>
            <person name="Glasner J.D."/>
            <person name="Rode C.K."/>
            <person name="Mayhew G.F."/>
            <person name="Gregor J."/>
            <person name="Davis N.W."/>
            <person name="Kirkpatrick H.A."/>
            <person name="Goeden M.A."/>
            <person name="Rose D.J."/>
            <person name="Mau B."/>
            <person name="Shao Y."/>
        </authorList>
    </citation>
    <scope>NUCLEOTIDE SEQUENCE [LARGE SCALE GENOMIC DNA]</scope>
    <source>
        <strain>K12 / MG1655 / ATCC 47076</strain>
    </source>
</reference>
<reference key="5">
    <citation type="journal article" date="2006" name="Mol. Syst. Biol.">
        <title>Highly accurate genome sequences of Escherichia coli K-12 strains MG1655 and W3110.</title>
        <authorList>
            <person name="Hayashi K."/>
            <person name="Morooka N."/>
            <person name="Yamamoto Y."/>
            <person name="Fujita K."/>
            <person name="Isono K."/>
            <person name="Choi S."/>
            <person name="Ohtsubo E."/>
            <person name="Baba T."/>
            <person name="Wanner B.L."/>
            <person name="Mori H."/>
            <person name="Horiuchi T."/>
        </authorList>
    </citation>
    <scope>NUCLEOTIDE SEQUENCE [LARGE SCALE GENOMIC DNA]</scope>
    <source>
        <strain>K12 / W3110 / ATCC 27325 / DSM 5911</strain>
    </source>
</reference>
<reference key="6">
    <citation type="journal article" date="2006" name="Proc. Natl. Acad. Sci. U.S.A.">
        <title>Identification of a protein complex that assembles lipopolysaccharide in the outer membrane of Escherichia coli.</title>
        <authorList>
            <person name="Wu T."/>
            <person name="McCandlish A.C."/>
            <person name="Gronenberg L.S."/>
            <person name="Chng S.-S."/>
            <person name="Silhavy T.J."/>
            <person name="Kahne D."/>
        </authorList>
    </citation>
    <scope>IDENTIFICATION BY MASS SPECTROMETRY</scope>
    <scope>FUNCTION</scope>
    <scope>INTERACTION WITH LPTD</scope>
    <source>
        <strain>K12 / MC4100 / ATCC 35695 / DSM 6574</strain>
    </source>
</reference>
<reference key="7">
    <citation type="journal article" date="2008" name="J. Bacteriol.">
        <title>Functional analysis of the protein machinery required for transport of lipopolysaccharide to the outer membrane of Escherichia coli.</title>
        <authorList>
            <person name="Sperandeo P."/>
            <person name="Lau F.K."/>
            <person name="Carpentieri A."/>
            <person name="De Castro C."/>
            <person name="Molinaro A."/>
            <person name="Deho G."/>
            <person name="Silhavy T.J."/>
            <person name="Polissi A."/>
        </authorList>
    </citation>
    <scope>FUNCTION</scope>
    <scope>GENE NAME</scope>
    <source>
        <strain>K12 / MC4100 / ATCC 35695 / DSM 6574</strain>
    </source>
</reference>
<reference key="8">
    <citation type="journal article" date="2010" name="Biochemistry">
        <title>Proteins required for lipopolysaccharide assembly in Escherichia coli form a transenvelope complex.</title>
        <authorList>
            <person name="Chng S.S."/>
            <person name="Gronenberg L.S."/>
            <person name="Kahne D."/>
        </authorList>
    </citation>
    <scope>SUBCELLULAR LOCATION</scope>
</reference>
<reference key="9">
    <citation type="journal article" date="2010" name="Proc. Natl. Acad. Sci. U.S.A.">
        <title>Characterization of the two-protein complex in Escherichia coli responsible for lipopolysaccharide assembly at the outer membrane.</title>
        <authorList>
            <person name="Chng S.S."/>
            <person name="Ruiz N."/>
            <person name="Chimalakonda G."/>
            <person name="Silhavy T.J."/>
            <person name="Kahne D."/>
        </authorList>
    </citation>
    <scope>FUNCTION</scope>
    <scope>INTERACTION WITH LPTD</scope>
</reference>
<reference key="10">
    <citation type="journal article" date="2011" name="Proc. Natl. Acad. Sci. U.S.A.">
        <title>The complex that inserts lipopolysaccharide into the bacterial outer membrane forms a two-protein plug-and-barrel.</title>
        <authorList>
            <person name="Freinkman E."/>
            <person name="Chng S.S."/>
            <person name="Kahne D."/>
        </authorList>
    </citation>
    <scope>INTERACTION WITH LPTD</scope>
    <scope>SUBCELLULAR LOCATION</scope>
</reference>
<reference key="11">
    <citation type="journal article" date="2011" name="Proc. Natl. Acad. Sci. U.S.A.">
        <title>Lipoprotein LptE is required for the assembly of LptD by the beta-barrel assembly machine in the outer membrane of Escherichia coli.</title>
        <authorList>
            <person name="Chimalakonda G."/>
            <person name="Ruiz N."/>
            <person name="Chng S.S."/>
            <person name="Garner R.A."/>
            <person name="Kahne D."/>
            <person name="Silhavy T.J."/>
        </authorList>
    </citation>
    <scope>INTERACTION WITH LPTD</scope>
    <scope>MUTAGENESIS OF 117-PRO--SER-119</scope>
</reference>
<reference key="12">
    <citation type="journal article" date="2023" name="Nat. Commun.">
        <title>LptM promotes oxidative maturation of the lipopolysaccharide translocon by substrate binding mimicry.</title>
        <authorList>
            <person name="Yang Y."/>
            <person name="Chen H."/>
            <person name="Corey R.A."/>
            <person name="Morales V."/>
            <person name="Quentin Y."/>
            <person name="Froment C."/>
            <person name="Caumont-Sarcos A."/>
            <person name="Albenne C."/>
            <person name="Burlet-Schiltz O."/>
            <person name="Ranava D."/>
            <person name="Stansfeld P.J."/>
            <person name="Marcoux J."/>
            <person name="Ieva R."/>
        </authorList>
    </citation>
    <scope>INTERACTION WITH LPTM</scope>
    <source>
        <strain>K12 / BW25113</strain>
    </source>
</reference>
<dbReference type="EMBL" id="M18277">
    <property type="protein sequence ID" value="AAA24554.1"/>
    <property type="molecule type" value="Genomic_DNA"/>
</dbReference>
<dbReference type="EMBL" id="U82598">
    <property type="protein sequence ID" value="AAB40842.1"/>
    <property type="molecule type" value="Genomic_DNA"/>
</dbReference>
<dbReference type="EMBL" id="U00096">
    <property type="protein sequence ID" value="AAC73742.1"/>
    <property type="molecule type" value="Genomic_DNA"/>
</dbReference>
<dbReference type="EMBL" id="AP009048">
    <property type="protein sequence ID" value="BAA35288.1"/>
    <property type="molecule type" value="Genomic_DNA"/>
</dbReference>
<dbReference type="PIR" id="G64798">
    <property type="entry name" value="LPECRB"/>
</dbReference>
<dbReference type="RefSeq" id="NP_415174.1">
    <property type="nucleotide sequence ID" value="NC_000913.3"/>
</dbReference>
<dbReference type="RefSeq" id="WP_001269673.1">
    <property type="nucleotide sequence ID" value="NZ_STEB01000031.1"/>
</dbReference>
<dbReference type="PDB" id="4NHR">
    <property type="method" value="X-ray"/>
    <property type="resolution" value="2.34 A"/>
    <property type="chains" value="A=20-182"/>
</dbReference>
<dbReference type="PDB" id="4RH8">
    <property type="method" value="X-ray"/>
    <property type="resolution" value="2.20 A"/>
    <property type="chains" value="A/B/C/D=20-186"/>
</dbReference>
<dbReference type="PDB" id="4RHB">
    <property type="method" value="X-ray"/>
    <property type="resolution" value="3.35 A"/>
    <property type="chains" value="B/D=19-193"/>
</dbReference>
<dbReference type="PDBsum" id="4NHR"/>
<dbReference type="PDBsum" id="4RH8"/>
<dbReference type="PDBsum" id="4RHB"/>
<dbReference type="SMR" id="P0ADC1"/>
<dbReference type="BioGRID" id="4260757">
    <property type="interactions" value="235"/>
</dbReference>
<dbReference type="ComplexPortal" id="CPX-1093">
    <property type="entry name" value="LptDE outer membrane translocon complex"/>
</dbReference>
<dbReference type="DIP" id="DIP-35987N"/>
<dbReference type="FunCoup" id="P0ADC1">
    <property type="interactions" value="55"/>
</dbReference>
<dbReference type="IntAct" id="P0ADC1">
    <property type="interactions" value="6"/>
</dbReference>
<dbReference type="STRING" id="511145.b0641"/>
<dbReference type="TCDB" id="1.B.42.1.2">
    <property type="family name" value="the outer membrane lipopolysaccharide export porin (lps-ep) family"/>
</dbReference>
<dbReference type="jPOST" id="P0ADC1"/>
<dbReference type="PaxDb" id="511145-b0641"/>
<dbReference type="EnsemblBacteria" id="AAC73742">
    <property type="protein sequence ID" value="AAC73742"/>
    <property type="gene ID" value="b0641"/>
</dbReference>
<dbReference type="GeneID" id="93776841"/>
<dbReference type="GeneID" id="946257"/>
<dbReference type="KEGG" id="ecj:JW0636"/>
<dbReference type="KEGG" id="eco:b0641"/>
<dbReference type="KEGG" id="ecoc:C3026_03205"/>
<dbReference type="PATRIC" id="fig|1411691.4.peg.1627"/>
<dbReference type="EchoBASE" id="EB0848"/>
<dbReference type="eggNOG" id="COG2980">
    <property type="taxonomic scope" value="Bacteria"/>
</dbReference>
<dbReference type="HOGENOM" id="CLU_103309_1_1_6"/>
<dbReference type="InParanoid" id="P0ADC1"/>
<dbReference type="OMA" id="ACGFHFQ"/>
<dbReference type="OrthoDB" id="5801564at2"/>
<dbReference type="PhylomeDB" id="P0ADC1"/>
<dbReference type="BioCyc" id="EcoCyc:EG10855-MONOMER"/>
<dbReference type="BioCyc" id="MetaCyc:EG10855-MONOMER"/>
<dbReference type="EvolutionaryTrace" id="P0ADC1"/>
<dbReference type="PHI-base" id="PHI:10313"/>
<dbReference type="PRO" id="PR:P0ADC1"/>
<dbReference type="Proteomes" id="UP000000625">
    <property type="component" value="Chromosome"/>
</dbReference>
<dbReference type="GO" id="GO:0009279">
    <property type="term" value="C:cell outer membrane"/>
    <property type="evidence" value="ECO:0000314"/>
    <property type="project" value="EcoCyc"/>
</dbReference>
<dbReference type="GO" id="GO:1990351">
    <property type="term" value="C:transporter complex"/>
    <property type="evidence" value="ECO:0000314"/>
    <property type="project" value="EcoCyc"/>
</dbReference>
<dbReference type="GO" id="GO:0001530">
    <property type="term" value="F:lipopolysaccharide binding"/>
    <property type="evidence" value="ECO:0000314"/>
    <property type="project" value="EcoCyc"/>
</dbReference>
<dbReference type="GO" id="GO:0043165">
    <property type="term" value="P:Gram-negative-bacterium-type cell outer membrane assembly"/>
    <property type="evidence" value="ECO:0000315"/>
    <property type="project" value="EcoCyc"/>
</dbReference>
<dbReference type="GO" id="GO:0015920">
    <property type="term" value="P:lipopolysaccharide transport"/>
    <property type="evidence" value="ECO:0000315"/>
    <property type="project" value="EcoCyc"/>
</dbReference>
<dbReference type="FunFam" id="3.30.160.150:FF:000001">
    <property type="entry name" value="LPS-assembly lipoprotein LptE"/>
    <property type="match status" value="1"/>
</dbReference>
<dbReference type="Gene3D" id="3.30.160.150">
    <property type="entry name" value="Lipoprotein like domain"/>
    <property type="match status" value="1"/>
</dbReference>
<dbReference type="HAMAP" id="MF_01186">
    <property type="entry name" value="LPS_assembly_LptE"/>
    <property type="match status" value="1"/>
</dbReference>
<dbReference type="InterPro" id="IPR007485">
    <property type="entry name" value="LPS_assembly_LptE"/>
</dbReference>
<dbReference type="NCBIfam" id="NF008062">
    <property type="entry name" value="PRK10796.1"/>
    <property type="match status" value="1"/>
</dbReference>
<dbReference type="PANTHER" id="PTHR38098">
    <property type="entry name" value="LPS-ASSEMBLY LIPOPROTEIN LPTE"/>
    <property type="match status" value="1"/>
</dbReference>
<dbReference type="PANTHER" id="PTHR38098:SF1">
    <property type="entry name" value="LPS-ASSEMBLY LIPOPROTEIN LPTE"/>
    <property type="match status" value="1"/>
</dbReference>
<dbReference type="Pfam" id="PF04390">
    <property type="entry name" value="LptE"/>
    <property type="match status" value="1"/>
</dbReference>
<dbReference type="PROSITE" id="PS51257">
    <property type="entry name" value="PROKAR_LIPOPROTEIN"/>
    <property type="match status" value="1"/>
</dbReference>
<feature type="signal peptide">
    <location>
        <begin position="1"/>
        <end position="18"/>
    </location>
</feature>
<feature type="chain" id="PRO_0000018185" description="LPS-assembly lipoprotein LptE">
    <location>
        <begin position="19"/>
        <end position="193"/>
    </location>
</feature>
<feature type="region of interest" description="Disordered" evidence="2">
    <location>
        <begin position="166"/>
        <end position="193"/>
    </location>
</feature>
<feature type="compositionally biased region" description="Low complexity" evidence="2">
    <location>
        <begin position="174"/>
        <end position="186"/>
    </location>
</feature>
<feature type="lipid moiety-binding region" description="N-palmitoyl cysteine" evidence="1">
    <location>
        <position position="19"/>
    </location>
</feature>
<feature type="lipid moiety-binding region" description="S-diacylglycerol cysteine" evidence="1">
    <location>
        <position position="19"/>
    </location>
</feature>
<feature type="mutagenesis site" description="Affects interaction with LptD and LptD biogenesis. Increases outer membrane permeability." evidence="8">
    <original>PIS</original>
    <variation>R</variation>
    <location>
        <begin position="117"/>
        <end position="119"/>
    </location>
</feature>
<feature type="sequence conflict" description="In Ref. 1; AAA24554." evidence="11" ref="1">
    <original>P</original>
    <variation>S</variation>
    <location>
        <position position="117"/>
    </location>
</feature>
<feature type="helix" evidence="13">
    <location>
        <begin position="31"/>
        <end position="33"/>
    </location>
</feature>
<feature type="strand" evidence="13">
    <location>
        <begin position="34"/>
        <end position="41"/>
    </location>
</feature>
<feature type="helix" evidence="13">
    <location>
        <begin position="46"/>
        <end position="57"/>
    </location>
</feature>
<feature type="strand" evidence="13">
    <location>
        <begin position="61"/>
        <end position="63"/>
    </location>
</feature>
<feature type="turn" evidence="12">
    <location>
        <begin position="69"/>
        <end position="71"/>
    </location>
</feature>
<feature type="strand" evidence="13">
    <location>
        <begin position="74"/>
        <end position="110"/>
    </location>
</feature>
<feature type="turn" evidence="13">
    <location>
        <begin position="111"/>
        <end position="113"/>
    </location>
</feature>
<feature type="strand" evidence="13">
    <location>
        <begin position="114"/>
        <end position="126"/>
    </location>
</feature>
<feature type="helix" evidence="12">
    <location>
        <begin position="130"/>
        <end position="132"/>
    </location>
</feature>
<feature type="helix" evidence="13">
    <location>
        <begin position="140"/>
        <end position="156"/>
    </location>
</feature>
<feature type="helix" evidence="13">
    <location>
        <begin position="159"/>
        <end position="168"/>
    </location>
</feature>
<organism>
    <name type="scientific">Escherichia coli (strain K12)</name>
    <dbReference type="NCBI Taxonomy" id="83333"/>
    <lineage>
        <taxon>Bacteria</taxon>
        <taxon>Pseudomonadati</taxon>
        <taxon>Pseudomonadota</taxon>
        <taxon>Gammaproteobacteria</taxon>
        <taxon>Enterobacterales</taxon>
        <taxon>Enterobacteriaceae</taxon>
        <taxon>Escherichia</taxon>
    </lineage>
</organism>